<feature type="chain" id="PRO_1000052879" description="Large ribosomal subunit protein bL25">
    <location>
        <begin position="1"/>
        <end position="178"/>
    </location>
</feature>
<dbReference type="EMBL" id="CP000776">
    <property type="protein sequence ID" value="ABS52414.1"/>
    <property type="molecule type" value="Genomic_DNA"/>
</dbReference>
<dbReference type="RefSeq" id="WP_012109156.1">
    <property type="nucleotide sequence ID" value="NC_009714.1"/>
</dbReference>
<dbReference type="SMR" id="A7I2W4"/>
<dbReference type="STRING" id="360107.CHAB381_1304"/>
<dbReference type="KEGG" id="cha:CHAB381_1304"/>
<dbReference type="eggNOG" id="COG1825">
    <property type="taxonomic scope" value="Bacteria"/>
</dbReference>
<dbReference type="HOGENOM" id="CLU_075939_2_2_7"/>
<dbReference type="OrthoDB" id="5339138at2"/>
<dbReference type="Proteomes" id="UP000002407">
    <property type="component" value="Chromosome"/>
</dbReference>
<dbReference type="GO" id="GO:0022625">
    <property type="term" value="C:cytosolic large ribosomal subunit"/>
    <property type="evidence" value="ECO:0007669"/>
    <property type="project" value="TreeGrafter"/>
</dbReference>
<dbReference type="GO" id="GO:0008097">
    <property type="term" value="F:5S rRNA binding"/>
    <property type="evidence" value="ECO:0007669"/>
    <property type="project" value="InterPro"/>
</dbReference>
<dbReference type="GO" id="GO:0003735">
    <property type="term" value="F:structural constituent of ribosome"/>
    <property type="evidence" value="ECO:0007669"/>
    <property type="project" value="InterPro"/>
</dbReference>
<dbReference type="GO" id="GO:0006412">
    <property type="term" value="P:translation"/>
    <property type="evidence" value="ECO:0007669"/>
    <property type="project" value="UniProtKB-UniRule"/>
</dbReference>
<dbReference type="CDD" id="cd00495">
    <property type="entry name" value="Ribosomal_L25_TL5_CTC"/>
    <property type="match status" value="1"/>
</dbReference>
<dbReference type="Gene3D" id="2.170.120.20">
    <property type="entry name" value="Ribosomal protein L25, beta domain"/>
    <property type="match status" value="1"/>
</dbReference>
<dbReference type="Gene3D" id="2.40.240.10">
    <property type="entry name" value="Ribosomal Protein L25, Chain P"/>
    <property type="match status" value="1"/>
</dbReference>
<dbReference type="HAMAP" id="MF_01334">
    <property type="entry name" value="Ribosomal_bL25_CTC"/>
    <property type="match status" value="1"/>
</dbReference>
<dbReference type="InterPro" id="IPR020056">
    <property type="entry name" value="Rbsml_bL25/Gln-tRNA_synth_N"/>
</dbReference>
<dbReference type="InterPro" id="IPR011035">
    <property type="entry name" value="Ribosomal_bL25/Gln-tRNA_synth"/>
</dbReference>
<dbReference type="InterPro" id="IPR020057">
    <property type="entry name" value="Ribosomal_bL25_b-dom"/>
</dbReference>
<dbReference type="InterPro" id="IPR037121">
    <property type="entry name" value="Ribosomal_bL25_C"/>
</dbReference>
<dbReference type="InterPro" id="IPR001021">
    <property type="entry name" value="Ribosomal_bL25_long"/>
</dbReference>
<dbReference type="InterPro" id="IPR029751">
    <property type="entry name" value="Ribosomal_L25_dom"/>
</dbReference>
<dbReference type="InterPro" id="IPR020930">
    <property type="entry name" value="Ribosomal_uL5_bac-type"/>
</dbReference>
<dbReference type="NCBIfam" id="TIGR00731">
    <property type="entry name" value="bL25_bact_ctc"/>
    <property type="match status" value="1"/>
</dbReference>
<dbReference type="NCBIfam" id="NF004129">
    <property type="entry name" value="PRK05618.1-4"/>
    <property type="match status" value="1"/>
</dbReference>
<dbReference type="PANTHER" id="PTHR33284">
    <property type="entry name" value="RIBOSOMAL PROTEIN L25/GLN-TRNA SYNTHETASE, ANTI-CODON-BINDING DOMAIN-CONTAINING PROTEIN"/>
    <property type="match status" value="1"/>
</dbReference>
<dbReference type="PANTHER" id="PTHR33284:SF1">
    <property type="entry name" value="RIBOSOMAL PROTEIN L25_GLN-TRNA SYNTHETASE, ANTI-CODON-BINDING DOMAIN-CONTAINING PROTEIN"/>
    <property type="match status" value="1"/>
</dbReference>
<dbReference type="Pfam" id="PF01386">
    <property type="entry name" value="Ribosomal_L25p"/>
    <property type="match status" value="1"/>
</dbReference>
<dbReference type="Pfam" id="PF14693">
    <property type="entry name" value="Ribosomal_TL5_C"/>
    <property type="match status" value="1"/>
</dbReference>
<dbReference type="SUPFAM" id="SSF50715">
    <property type="entry name" value="Ribosomal protein L25-like"/>
    <property type="match status" value="1"/>
</dbReference>
<evidence type="ECO:0000255" key="1">
    <source>
        <dbReference type="HAMAP-Rule" id="MF_01334"/>
    </source>
</evidence>
<evidence type="ECO:0000305" key="2"/>
<name>RL25_CAMHC</name>
<reference key="1">
    <citation type="submission" date="2007-07" db="EMBL/GenBank/DDBJ databases">
        <title>Complete genome sequence of Campylobacter hominis ATCC BAA-381, a commensal isolated from the human gastrointestinal tract.</title>
        <authorList>
            <person name="Fouts D.E."/>
            <person name="Mongodin E.F."/>
            <person name="Puiu D."/>
            <person name="Sebastian Y."/>
            <person name="Miller W.G."/>
            <person name="Mandrell R.E."/>
            <person name="Nelson K.E."/>
        </authorList>
    </citation>
    <scope>NUCLEOTIDE SEQUENCE [LARGE SCALE GENOMIC DNA]</scope>
    <source>
        <strain>ATCC BAA-381 / DSM 21671 / CCUG 45161 / LMG 19568 / NCTC 13146 / CH001A</strain>
    </source>
</reference>
<keyword id="KW-1185">Reference proteome</keyword>
<keyword id="KW-0687">Ribonucleoprotein</keyword>
<keyword id="KW-0689">Ribosomal protein</keyword>
<keyword id="KW-0694">RNA-binding</keyword>
<keyword id="KW-0699">rRNA-binding</keyword>
<protein>
    <recommendedName>
        <fullName evidence="1">Large ribosomal subunit protein bL25</fullName>
    </recommendedName>
    <alternativeName>
        <fullName evidence="2">50S ribosomal protein L25</fullName>
    </alternativeName>
    <alternativeName>
        <fullName evidence="1">General stress protein CTC</fullName>
    </alternativeName>
</protein>
<proteinExistence type="inferred from homology"/>
<organism>
    <name type="scientific">Campylobacter hominis (strain ATCC BAA-381 / DSM 21671 / CCUG 45161 / LMG 19568 / NCTC 13146 / CH001A)</name>
    <dbReference type="NCBI Taxonomy" id="360107"/>
    <lineage>
        <taxon>Bacteria</taxon>
        <taxon>Pseudomonadati</taxon>
        <taxon>Campylobacterota</taxon>
        <taxon>Epsilonproteobacteria</taxon>
        <taxon>Campylobacterales</taxon>
        <taxon>Campylobacteraceae</taxon>
        <taxon>Campylobacter</taxon>
    </lineage>
</organism>
<accession>A7I2W4</accession>
<comment type="function">
    <text evidence="1">This is one of the proteins that binds to the 5S RNA in the ribosome where it forms part of the central protuberance.</text>
</comment>
<comment type="subunit">
    <text evidence="1">Part of the 50S ribosomal subunit; part of the 5S rRNA/L5/L18/L25 subcomplex. Contacts the 5S rRNA. Binds to the 5S rRNA independently of L5 and L18.</text>
</comment>
<comment type="similarity">
    <text evidence="1">Belongs to the bacterial ribosomal protein bL25 family. CTC subfamily.</text>
</comment>
<sequence length="178" mass="19738">MLEGIVRESIGRKSSKALRRDGYLIANIYAKGFKNINAAFKVNDFIKVVKAKTTLPFEVKIADKTYKVVVQDYQKHPVTNALKHVDLRIVLDNEISHYLVPVKIVGVAKGLRNKGILVQSKRRLTVKCAGKDLPNEFVLDVSDLDVNDSLLVRDIKLPDNVSIVENNSVAVVGVSTAQ</sequence>
<gene>
    <name evidence="1" type="primary">rplY</name>
    <name evidence="1" type="synonym">ctc</name>
    <name type="ordered locus">CHAB381_1304</name>
</gene>